<organism>
    <name type="scientific">Bos taurus</name>
    <name type="common">Bovine</name>
    <dbReference type="NCBI Taxonomy" id="9913"/>
    <lineage>
        <taxon>Eukaryota</taxon>
        <taxon>Metazoa</taxon>
        <taxon>Chordata</taxon>
        <taxon>Craniata</taxon>
        <taxon>Vertebrata</taxon>
        <taxon>Euteleostomi</taxon>
        <taxon>Mammalia</taxon>
        <taxon>Eutheria</taxon>
        <taxon>Laurasiatheria</taxon>
        <taxon>Artiodactyla</taxon>
        <taxon>Ruminantia</taxon>
        <taxon>Pecora</taxon>
        <taxon>Bovidae</taxon>
        <taxon>Bovinae</taxon>
        <taxon>Bos</taxon>
    </lineage>
</organism>
<comment type="pathway">
    <text>Lipid metabolism; fatty acid metabolism.</text>
</comment>
<comment type="subcellular location">
    <subcellularLocation>
        <location evidence="2">Membrane</location>
        <topology evidence="2">Multi-pass membrane protein</topology>
    </subcellularLocation>
</comment>
<comment type="similarity">
    <text evidence="2">Belongs to the fatty acid desaturase type 1 family.</text>
</comment>
<reference key="1">
    <citation type="submission" date="2007-02" db="EMBL/GenBank/DDBJ databases">
        <authorList>
            <consortium name="NIH - Mammalian Gene Collection (MGC) project"/>
        </authorList>
    </citation>
    <scope>NUCLEOTIDE SEQUENCE [LARGE SCALE MRNA]</scope>
    <source>
        <strain>Hereford</strain>
        <tissue>Thalamus</tissue>
    </source>
</reference>
<accession>A2VE15</accession>
<feature type="chain" id="PRO_0000341545" description="Fatty acid desaturase 6">
    <location>
        <begin position="1"/>
        <end position="342"/>
    </location>
</feature>
<feature type="transmembrane region" description="Helical" evidence="1">
    <location>
        <begin position="39"/>
        <end position="59"/>
    </location>
</feature>
<feature type="transmembrane region" description="Helical" evidence="1">
    <location>
        <begin position="63"/>
        <end position="83"/>
    </location>
</feature>
<feature type="transmembrane region" description="Helical" evidence="1">
    <location>
        <begin position="151"/>
        <end position="171"/>
    </location>
</feature>
<feature type="transmembrane region" description="Helical" evidence="1">
    <location>
        <begin position="185"/>
        <end position="205"/>
    </location>
</feature>
<feature type="short sequence motif" description="Histidine box-1">
    <location>
        <begin position="87"/>
        <end position="91"/>
    </location>
</feature>
<feature type="short sequence motif" description="Histidine box-2">
    <location>
        <begin position="124"/>
        <end position="128"/>
    </location>
</feature>
<feature type="short sequence motif" description="Histidine box-3">
    <location>
        <begin position="277"/>
        <end position="281"/>
    </location>
</feature>
<evidence type="ECO:0000255" key="1"/>
<evidence type="ECO:0000305" key="2"/>
<proteinExistence type="evidence at transcript level"/>
<keyword id="KW-0275">Fatty acid biosynthesis</keyword>
<keyword id="KW-0276">Fatty acid metabolism</keyword>
<keyword id="KW-0444">Lipid biosynthesis</keyword>
<keyword id="KW-0443">Lipid metabolism</keyword>
<keyword id="KW-0472">Membrane</keyword>
<keyword id="KW-0560">Oxidoreductase</keyword>
<keyword id="KW-1185">Reference proteome</keyword>
<keyword id="KW-0812">Transmembrane</keyword>
<keyword id="KW-1133">Transmembrane helix</keyword>
<name>FADS6_BOVIN</name>
<protein>
    <recommendedName>
        <fullName>Fatty acid desaturase 6</fullName>
        <ecNumber>1.14.19.-</ecNumber>
    </recommendedName>
</protein>
<gene>
    <name type="primary">FADS6</name>
</gene>
<sequence>MEPAGGAPRESARAEALLGELEARVQEVVRASSWWERHGVDCAILALSLLALPPGFLCLRSDSPLVFALGITILGVCHYTLTVKGSHLATHGALTESRGWSKVWTLFFVEVCTSFTAEYAKYGHVKMHHGYTNVLGLGDSSTWRLPCLNRYVYMFLAPLLIPIITPLVAVERLREVELRTALRTLGLISLGLYSQYWLLLNVSGFQSPSSALACMLITRSLLAHPYLHVNIFQHIGLPMFSPDKKPRRIHMMSLGVLNLPRLPVLDWAFGHSLISCHVEHHLFPRLSDNMCLKVKPVVSQFLHEKQLPYNEDSYLARFWLFLQRYEEFMVQTPPITELVGLQ</sequence>
<dbReference type="EC" id="1.14.19.-"/>
<dbReference type="EMBL" id="BC133520">
    <property type="protein sequence ID" value="AAI33521.1"/>
    <property type="molecule type" value="mRNA"/>
</dbReference>
<dbReference type="RefSeq" id="NP_001075191.1">
    <property type="nucleotide sequence ID" value="NM_001081722.1"/>
</dbReference>
<dbReference type="FunCoup" id="A2VE15">
    <property type="interactions" value="38"/>
</dbReference>
<dbReference type="STRING" id="9913.ENSBTAP00000022906"/>
<dbReference type="PaxDb" id="9913-ENSBTAP00000022906"/>
<dbReference type="Ensembl" id="ENSBTAT00000022906.6">
    <property type="protein sequence ID" value="ENSBTAP00000022906.4"/>
    <property type="gene ID" value="ENSBTAG00000017242.6"/>
</dbReference>
<dbReference type="GeneID" id="523867"/>
<dbReference type="KEGG" id="bta:523867"/>
<dbReference type="CTD" id="283985"/>
<dbReference type="VEuPathDB" id="HostDB:ENSBTAG00000017242"/>
<dbReference type="VGNC" id="VGNC:28704">
    <property type="gene designation" value="FADS6"/>
</dbReference>
<dbReference type="eggNOG" id="ENOG502QQ1J">
    <property type="taxonomic scope" value="Eukaryota"/>
</dbReference>
<dbReference type="GeneTree" id="ENSGT00950000182990"/>
<dbReference type="HOGENOM" id="CLU_047135_0_0_1"/>
<dbReference type="InParanoid" id="A2VE15"/>
<dbReference type="OMA" id="IHQMTHG"/>
<dbReference type="OrthoDB" id="8734935at2759"/>
<dbReference type="TreeFam" id="TF333083"/>
<dbReference type="UniPathway" id="UPA00199"/>
<dbReference type="Proteomes" id="UP000009136">
    <property type="component" value="Chromosome 19"/>
</dbReference>
<dbReference type="Bgee" id="ENSBTAG00000017242">
    <property type="expression patterns" value="Expressed in cortex of kidney and 98 other cell types or tissues"/>
</dbReference>
<dbReference type="GO" id="GO:0016020">
    <property type="term" value="C:membrane"/>
    <property type="evidence" value="ECO:0007669"/>
    <property type="project" value="UniProtKB-SubCell"/>
</dbReference>
<dbReference type="GO" id="GO:0016717">
    <property type="term" value="F:oxidoreductase activity, acting on paired donors, with oxidation of a pair of donors resulting in the reduction of molecular oxygen to two molecules of water"/>
    <property type="evidence" value="ECO:0000318"/>
    <property type="project" value="GO_Central"/>
</dbReference>
<dbReference type="GO" id="GO:0006633">
    <property type="term" value="P:fatty acid biosynthetic process"/>
    <property type="evidence" value="ECO:0007669"/>
    <property type="project" value="UniProtKB-KW"/>
</dbReference>
<dbReference type="GO" id="GO:0006629">
    <property type="term" value="P:lipid metabolic process"/>
    <property type="evidence" value="ECO:0000318"/>
    <property type="project" value="GO_Central"/>
</dbReference>
<dbReference type="InterPro" id="IPR005804">
    <property type="entry name" value="FA_desaturase_dom"/>
</dbReference>
<dbReference type="InterPro" id="IPR012171">
    <property type="entry name" value="Fatty_acid_desaturase"/>
</dbReference>
<dbReference type="PANTHER" id="PTHR19353">
    <property type="entry name" value="FATTY ACID DESATURASE 2"/>
    <property type="match status" value="1"/>
</dbReference>
<dbReference type="PANTHER" id="PTHR19353:SF13">
    <property type="entry name" value="FATTY ACID DESATURASE 6"/>
    <property type="match status" value="1"/>
</dbReference>
<dbReference type="Pfam" id="PF00487">
    <property type="entry name" value="FA_desaturase"/>
    <property type="match status" value="1"/>
</dbReference>